<reference key="1">
    <citation type="submission" date="2007-09" db="EMBL/GenBank/DDBJ databases">
        <title>Complete genome sequence of Rickettsia rickettsii.</title>
        <authorList>
            <person name="Madan A."/>
            <person name="Fahey J."/>
            <person name="Helton E."/>
            <person name="Ketteman M."/>
            <person name="Madan A."/>
            <person name="Rodrigues S."/>
            <person name="Sanchez A."/>
            <person name="Dasch G."/>
            <person name="Eremeeva M."/>
        </authorList>
    </citation>
    <scope>NUCLEOTIDE SEQUENCE [LARGE SCALE GENOMIC DNA]</scope>
    <source>
        <strain>Sheila Smith</strain>
    </source>
</reference>
<comment type="function">
    <text evidence="1">Plays an essential role in the initiation and regulation of chromosomal replication. ATP-DnaA binds to the origin of replication (oriC) to initiate formation of the DNA replication initiation complex once per cell cycle. Binds the DnaA box (a 9 base pair repeat at the origin) and separates the double-stranded (ds)DNA. Forms a right-handed helical filament on oriC DNA; dsDNA binds to the exterior of the filament while single-stranded (ss)DNA is stabiized in the filament's interior. The ATP-DnaA-oriC complex binds and stabilizes one strand of the AT-rich DNA unwinding element (DUE), permitting loading of DNA polymerase. After initiation quickly degrades to an ADP-DnaA complex that is not apt for DNA replication. Binds acidic phospholipids.</text>
</comment>
<comment type="subunit">
    <text evidence="1">Oligomerizes as a right-handed, spiral filament on DNA at oriC.</text>
</comment>
<comment type="subcellular location">
    <subcellularLocation>
        <location evidence="1">Cytoplasm</location>
    </subcellularLocation>
</comment>
<comment type="domain">
    <text evidence="1">Domain I is involved in oligomerization and binding regulators, domain II is flexibile and of varying length in different bacteria, domain III forms the AAA+ region, while domain IV binds dsDNA.</text>
</comment>
<comment type="similarity">
    <text evidence="1">Belongs to the DnaA family.</text>
</comment>
<feature type="chain" id="PRO_1000048712" description="Chromosomal replication initiator protein DnaA">
    <location>
        <begin position="1"/>
        <end position="463"/>
    </location>
</feature>
<feature type="region of interest" description="Domain I, interacts with DnaA modulators" evidence="1">
    <location>
        <begin position="1"/>
        <end position="83"/>
    </location>
</feature>
<feature type="region of interest" description="Domain II" evidence="1">
    <location>
        <begin position="83"/>
        <end position="124"/>
    </location>
</feature>
<feature type="region of interest" description="Domain III, AAA+ region" evidence="1">
    <location>
        <begin position="125"/>
        <end position="343"/>
    </location>
</feature>
<feature type="region of interest" description="Domain IV, binds dsDNA" evidence="1">
    <location>
        <begin position="344"/>
        <end position="463"/>
    </location>
</feature>
<feature type="binding site" evidence="1">
    <location>
        <position position="171"/>
    </location>
    <ligand>
        <name>ATP</name>
        <dbReference type="ChEBI" id="CHEBI:30616"/>
    </ligand>
</feature>
<feature type="binding site" evidence="1">
    <location>
        <position position="173"/>
    </location>
    <ligand>
        <name>ATP</name>
        <dbReference type="ChEBI" id="CHEBI:30616"/>
    </ligand>
</feature>
<feature type="binding site" evidence="1">
    <location>
        <position position="174"/>
    </location>
    <ligand>
        <name>ATP</name>
        <dbReference type="ChEBI" id="CHEBI:30616"/>
    </ligand>
</feature>
<feature type="binding site" evidence="1">
    <location>
        <position position="175"/>
    </location>
    <ligand>
        <name>ATP</name>
        <dbReference type="ChEBI" id="CHEBI:30616"/>
    </ligand>
</feature>
<proteinExistence type="inferred from homology"/>
<keyword id="KW-0067">ATP-binding</keyword>
<keyword id="KW-0963">Cytoplasm</keyword>
<keyword id="KW-0235">DNA replication</keyword>
<keyword id="KW-0238">DNA-binding</keyword>
<keyword id="KW-0446">Lipid-binding</keyword>
<keyword id="KW-0547">Nucleotide-binding</keyword>
<sequence length="463" mass="52943">MSTNQIILTDQGDNYVNVWSHVAQDLYNHYGETLYNSWFSKVNFIESSLNTVILCAPTNFVRDWIKSKYSMVILQLFQHYNNTIKSIEIITKELPGTTQTVTELPTKTFADIGSSELNSENIFSTLDVRFTFDNFVVGAPNELAYAAARAVAESSGAVSESNPLFLYGGVGLGKTHLMHAIGWYIKQHNPSRKVIYMSAEKFMYQFVKALRNKEVISFKEKFRSVDVLMIDDIQFICGKDSTQEEFFHTFNTLIDNNRQMVISCDRSPSDLDNIEDRIKSRLGWGLVADVHSTTYELRLGILESKIEQMNVKIPKDVIDFLASKIVSNVRELEGALNKVIAHSNFTLKEITLENTQNILRDLLRSNERIITVEDIQKKVASRYNIKLSDMSSSRRLREVARPRQIAMYLSKALTPKSLADIGKKFGKKDHTTVMHAIKKVEELLENDIELREEINLLMKILQN</sequence>
<evidence type="ECO:0000255" key="1">
    <source>
        <dbReference type="HAMAP-Rule" id="MF_00377"/>
    </source>
</evidence>
<accession>A8GSY1</accession>
<dbReference type="EMBL" id="CP000848">
    <property type="protein sequence ID" value="ABV76506.1"/>
    <property type="molecule type" value="Genomic_DNA"/>
</dbReference>
<dbReference type="RefSeq" id="WP_010977515.1">
    <property type="nucleotide sequence ID" value="NZ_CP121767.1"/>
</dbReference>
<dbReference type="SMR" id="A8GSY1"/>
<dbReference type="GeneID" id="927916"/>
<dbReference type="KEGG" id="rri:A1G_05055"/>
<dbReference type="HOGENOM" id="CLU_026910_3_0_5"/>
<dbReference type="Proteomes" id="UP000006832">
    <property type="component" value="Chromosome"/>
</dbReference>
<dbReference type="GO" id="GO:0005737">
    <property type="term" value="C:cytoplasm"/>
    <property type="evidence" value="ECO:0007669"/>
    <property type="project" value="UniProtKB-SubCell"/>
</dbReference>
<dbReference type="GO" id="GO:0005886">
    <property type="term" value="C:plasma membrane"/>
    <property type="evidence" value="ECO:0007669"/>
    <property type="project" value="TreeGrafter"/>
</dbReference>
<dbReference type="GO" id="GO:0005524">
    <property type="term" value="F:ATP binding"/>
    <property type="evidence" value="ECO:0007669"/>
    <property type="project" value="UniProtKB-UniRule"/>
</dbReference>
<dbReference type="GO" id="GO:0016887">
    <property type="term" value="F:ATP hydrolysis activity"/>
    <property type="evidence" value="ECO:0007669"/>
    <property type="project" value="InterPro"/>
</dbReference>
<dbReference type="GO" id="GO:0003688">
    <property type="term" value="F:DNA replication origin binding"/>
    <property type="evidence" value="ECO:0007669"/>
    <property type="project" value="UniProtKB-UniRule"/>
</dbReference>
<dbReference type="GO" id="GO:0008289">
    <property type="term" value="F:lipid binding"/>
    <property type="evidence" value="ECO:0007669"/>
    <property type="project" value="UniProtKB-KW"/>
</dbReference>
<dbReference type="GO" id="GO:0006270">
    <property type="term" value="P:DNA replication initiation"/>
    <property type="evidence" value="ECO:0007669"/>
    <property type="project" value="UniProtKB-UniRule"/>
</dbReference>
<dbReference type="GO" id="GO:0006275">
    <property type="term" value="P:regulation of DNA replication"/>
    <property type="evidence" value="ECO:0007669"/>
    <property type="project" value="UniProtKB-UniRule"/>
</dbReference>
<dbReference type="CDD" id="cd00009">
    <property type="entry name" value="AAA"/>
    <property type="match status" value="1"/>
</dbReference>
<dbReference type="CDD" id="cd06571">
    <property type="entry name" value="Bac_DnaA_C"/>
    <property type="match status" value="1"/>
</dbReference>
<dbReference type="FunFam" id="3.40.50.300:FF:000668">
    <property type="entry name" value="Chromosomal replication initiator protein DnaA"/>
    <property type="match status" value="1"/>
</dbReference>
<dbReference type="Gene3D" id="1.10.1750.10">
    <property type="match status" value="1"/>
</dbReference>
<dbReference type="Gene3D" id="1.10.8.60">
    <property type="match status" value="1"/>
</dbReference>
<dbReference type="Gene3D" id="3.30.300.180">
    <property type="match status" value="1"/>
</dbReference>
<dbReference type="Gene3D" id="3.40.50.300">
    <property type="entry name" value="P-loop containing nucleotide triphosphate hydrolases"/>
    <property type="match status" value="1"/>
</dbReference>
<dbReference type="HAMAP" id="MF_00377">
    <property type="entry name" value="DnaA_bact"/>
    <property type="match status" value="1"/>
</dbReference>
<dbReference type="InterPro" id="IPR003593">
    <property type="entry name" value="AAA+_ATPase"/>
</dbReference>
<dbReference type="InterPro" id="IPR001957">
    <property type="entry name" value="Chromosome_initiator_DnaA"/>
</dbReference>
<dbReference type="InterPro" id="IPR020591">
    <property type="entry name" value="Chromosome_initiator_DnaA-like"/>
</dbReference>
<dbReference type="InterPro" id="IPR018312">
    <property type="entry name" value="Chromosome_initiator_DnaA_CS"/>
</dbReference>
<dbReference type="InterPro" id="IPR013159">
    <property type="entry name" value="DnaA_C"/>
</dbReference>
<dbReference type="InterPro" id="IPR013317">
    <property type="entry name" value="DnaA_dom"/>
</dbReference>
<dbReference type="InterPro" id="IPR024633">
    <property type="entry name" value="DnaA_N_dom"/>
</dbReference>
<dbReference type="InterPro" id="IPR038454">
    <property type="entry name" value="DnaA_N_sf"/>
</dbReference>
<dbReference type="InterPro" id="IPR027417">
    <property type="entry name" value="P-loop_NTPase"/>
</dbReference>
<dbReference type="InterPro" id="IPR010921">
    <property type="entry name" value="Trp_repressor/repl_initiator"/>
</dbReference>
<dbReference type="NCBIfam" id="TIGR00362">
    <property type="entry name" value="DnaA"/>
    <property type="match status" value="1"/>
</dbReference>
<dbReference type="PANTHER" id="PTHR30050">
    <property type="entry name" value="CHROMOSOMAL REPLICATION INITIATOR PROTEIN DNAA"/>
    <property type="match status" value="1"/>
</dbReference>
<dbReference type="PANTHER" id="PTHR30050:SF2">
    <property type="entry name" value="CHROMOSOMAL REPLICATION INITIATOR PROTEIN DNAA"/>
    <property type="match status" value="1"/>
</dbReference>
<dbReference type="Pfam" id="PF00308">
    <property type="entry name" value="Bac_DnaA"/>
    <property type="match status" value="1"/>
</dbReference>
<dbReference type="Pfam" id="PF08299">
    <property type="entry name" value="Bac_DnaA_C"/>
    <property type="match status" value="1"/>
</dbReference>
<dbReference type="Pfam" id="PF11638">
    <property type="entry name" value="DnaA_N"/>
    <property type="match status" value="1"/>
</dbReference>
<dbReference type="PRINTS" id="PR00051">
    <property type="entry name" value="DNAA"/>
</dbReference>
<dbReference type="SMART" id="SM00382">
    <property type="entry name" value="AAA"/>
    <property type="match status" value="1"/>
</dbReference>
<dbReference type="SMART" id="SM00760">
    <property type="entry name" value="Bac_DnaA_C"/>
    <property type="match status" value="1"/>
</dbReference>
<dbReference type="SUPFAM" id="SSF52540">
    <property type="entry name" value="P-loop containing nucleoside triphosphate hydrolases"/>
    <property type="match status" value="1"/>
</dbReference>
<dbReference type="SUPFAM" id="SSF48295">
    <property type="entry name" value="TrpR-like"/>
    <property type="match status" value="1"/>
</dbReference>
<dbReference type="PROSITE" id="PS01008">
    <property type="entry name" value="DNAA"/>
    <property type="match status" value="1"/>
</dbReference>
<organism>
    <name type="scientific">Rickettsia rickettsii (strain Sheila Smith)</name>
    <dbReference type="NCBI Taxonomy" id="392021"/>
    <lineage>
        <taxon>Bacteria</taxon>
        <taxon>Pseudomonadati</taxon>
        <taxon>Pseudomonadota</taxon>
        <taxon>Alphaproteobacteria</taxon>
        <taxon>Rickettsiales</taxon>
        <taxon>Rickettsiaceae</taxon>
        <taxon>Rickettsieae</taxon>
        <taxon>Rickettsia</taxon>
        <taxon>spotted fever group</taxon>
    </lineage>
</organism>
<name>DNAA_RICRS</name>
<protein>
    <recommendedName>
        <fullName evidence="1">Chromosomal replication initiator protein DnaA</fullName>
    </recommendedName>
</protein>
<gene>
    <name evidence="1" type="primary">dnaA</name>
    <name type="ordered locus">A1G_05055</name>
</gene>